<gene>
    <name type="primary">ATG34</name>
    <name type="synonym">ATG19-B</name>
    <name type="ordered locus">YOL083W</name>
    <name type="ORF">O0957</name>
</gene>
<proteinExistence type="evidence at protein level"/>
<dbReference type="EMBL" id="X83121">
    <property type="protein sequence ID" value="CAA58197.1"/>
    <property type="molecule type" value="Genomic_DNA"/>
</dbReference>
<dbReference type="EMBL" id="Z74825">
    <property type="protein sequence ID" value="CAA99095.1"/>
    <property type="molecule type" value="Genomic_DNA"/>
</dbReference>
<dbReference type="EMBL" id="BK006948">
    <property type="protein sequence ID" value="DAA10701.1"/>
    <property type="molecule type" value="Genomic_DNA"/>
</dbReference>
<dbReference type="PIR" id="S57387">
    <property type="entry name" value="S57387"/>
</dbReference>
<dbReference type="RefSeq" id="NP_014558.1">
    <property type="nucleotide sequence ID" value="NM_001183337.1"/>
</dbReference>
<dbReference type="PDB" id="2KZK">
    <property type="method" value="NMR"/>
    <property type="chains" value="A=246-348"/>
</dbReference>
<dbReference type="PDBsum" id="2KZK"/>
<dbReference type="BMRB" id="Q12292"/>
<dbReference type="SMR" id="Q12292"/>
<dbReference type="BioGRID" id="34319">
    <property type="interactions" value="73"/>
</dbReference>
<dbReference type="DIP" id="DIP-1598N"/>
<dbReference type="FunCoup" id="Q12292">
    <property type="interactions" value="193"/>
</dbReference>
<dbReference type="IntAct" id="Q12292">
    <property type="interactions" value="18"/>
</dbReference>
<dbReference type="MINT" id="Q12292"/>
<dbReference type="STRING" id="4932.YOL083W"/>
<dbReference type="iPTMnet" id="Q12292"/>
<dbReference type="PaxDb" id="4932-YOL083W"/>
<dbReference type="PeptideAtlas" id="Q12292"/>
<dbReference type="EnsemblFungi" id="YOL083W_mRNA">
    <property type="protein sequence ID" value="YOL083W"/>
    <property type="gene ID" value="YOL083W"/>
</dbReference>
<dbReference type="GeneID" id="854071"/>
<dbReference type="KEGG" id="sce:YOL083W"/>
<dbReference type="AGR" id="SGD:S000005443"/>
<dbReference type="SGD" id="S000005443">
    <property type="gene designation" value="ATG34"/>
</dbReference>
<dbReference type="VEuPathDB" id="FungiDB:YOL083W"/>
<dbReference type="GeneTree" id="ENSGT01110000271661"/>
<dbReference type="HOGENOM" id="CLU_055007_0_0_1"/>
<dbReference type="InParanoid" id="Q12292"/>
<dbReference type="OrthoDB" id="4042094at2759"/>
<dbReference type="BioCyc" id="YEAST:G3O-33486-MONOMER"/>
<dbReference type="BioGRID-ORCS" id="854071">
    <property type="hits" value="0 hits in 10 CRISPR screens"/>
</dbReference>
<dbReference type="CD-CODE" id="E03F929F">
    <property type="entry name" value="Stress granule"/>
</dbReference>
<dbReference type="EvolutionaryTrace" id="Q12292"/>
<dbReference type="PRO" id="PR:Q12292"/>
<dbReference type="Proteomes" id="UP000002311">
    <property type="component" value="Chromosome XV"/>
</dbReference>
<dbReference type="RNAct" id="Q12292">
    <property type="molecule type" value="protein"/>
</dbReference>
<dbReference type="GO" id="GO:0034270">
    <property type="term" value="C:Cvt complex"/>
    <property type="evidence" value="ECO:0000314"/>
    <property type="project" value="SGD"/>
</dbReference>
<dbReference type="GO" id="GO:0005829">
    <property type="term" value="C:cytosol"/>
    <property type="evidence" value="ECO:0007005"/>
    <property type="project" value="SGD"/>
</dbReference>
<dbReference type="GO" id="GO:0034045">
    <property type="term" value="C:phagophore assembly site membrane"/>
    <property type="evidence" value="ECO:0007669"/>
    <property type="project" value="UniProtKB-SubCell"/>
</dbReference>
<dbReference type="GO" id="GO:0030674">
    <property type="term" value="F:protein-macromolecule adaptor activity"/>
    <property type="evidence" value="ECO:0000316"/>
    <property type="project" value="SGD"/>
</dbReference>
<dbReference type="GO" id="GO:0016236">
    <property type="term" value="P:macroautophagy"/>
    <property type="evidence" value="ECO:0000316"/>
    <property type="project" value="SGD"/>
</dbReference>
<dbReference type="GO" id="GO:0071211">
    <property type="term" value="P:protein targeting to vacuole involved in autophagy"/>
    <property type="evidence" value="ECO:0000316"/>
    <property type="project" value="SGD"/>
</dbReference>
<dbReference type="GO" id="GO:0065003">
    <property type="term" value="P:protein-containing complex assembly"/>
    <property type="evidence" value="ECO:0000315"/>
    <property type="project" value="SGD"/>
</dbReference>
<dbReference type="GO" id="GO:0031503">
    <property type="term" value="P:protein-containing complex localization"/>
    <property type="evidence" value="ECO:0000316"/>
    <property type="project" value="SGD"/>
</dbReference>
<dbReference type="CDD" id="cd12213">
    <property type="entry name" value="ABD"/>
    <property type="match status" value="1"/>
</dbReference>
<dbReference type="Gene3D" id="2.60.40.2830">
    <property type="match status" value="1"/>
</dbReference>
<dbReference type="InterPro" id="IPR024543">
    <property type="entry name" value="Atg19/Atg34_C"/>
</dbReference>
<dbReference type="Pfam" id="PF12744">
    <property type="entry name" value="ATG19"/>
    <property type="match status" value="1"/>
</dbReference>
<comment type="function">
    <text evidence="1 2">Cargo-receptor protein involved in the cytoplasm to vacuole transport (Cvt) and in autophagy. Recognizes cargo proteins, such as AMS1 and delivers them to the pre-autophagosomal structure for eventual engulfment by the autophagosome and targeting to the vacuole.</text>
</comment>
<comment type="subunit">
    <text evidence="1 2">Interacts with AMS1, ATG8 and ATG11.</text>
</comment>
<comment type="interaction">
    <interactant intactId="EBI-36362">
        <id>Q12292</id>
    </interactant>
    <interactant intactId="EBI-10398">
        <id>P22855</id>
        <label>AMS1</label>
    </interactant>
    <organismsDiffer>false</organismsDiffer>
    <experiments>3</experiments>
</comment>
<comment type="interaction">
    <interactant intactId="EBI-36362">
        <id>Q12292</id>
    </interactant>
    <interactant intactId="EBI-31977">
        <id>Q12527</id>
        <label>ATG11</label>
    </interactant>
    <organismsDiffer>false</organismsDiffer>
    <experiments>2</experiments>
</comment>
<comment type="interaction">
    <interactant intactId="EBI-36362">
        <id>Q12292</id>
    </interactant>
    <interactant intactId="EBI-2684">
        <id>P38182</id>
        <label>ATG8</label>
    </interactant>
    <organismsDiffer>false</organismsDiffer>
    <experiments>4</experiments>
</comment>
<comment type="interaction">
    <interactant intactId="EBI-36362">
        <id>Q12292</id>
    </interactant>
    <interactant intactId="EBI-8536">
        <id>P29295</id>
        <label>HRR25</label>
    </interactant>
    <organismsDiffer>false</organismsDiffer>
    <experiments>2</experiments>
</comment>
<comment type="subcellular location">
    <subcellularLocation>
        <location evidence="1">Preautophagosomal structure membrane</location>
        <topology evidence="1">Peripheral membrane protein</topology>
    </subcellularLocation>
    <text>Membrane-associated protein found in pre-autophagosomal structure and other perivacuolar punctate structures.</text>
</comment>
<feature type="chain" id="PRO_0000235927" description="Autophagy-related protein 34">
    <location>
        <begin position="1"/>
        <end position="412"/>
    </location>
</feature>
<feature type="region of interest" description="AMS1-binding">
    <location>
        <begin position="246"/>
        <end position="348"/>
    </location>
</feature>
<feature type="strand" evidence="3">
    <location>
        <begin position="251"/>
        <end position="254"/>
    </location>
</feature>
<feature type="strand" evidence="3">
    <location>
        <begin position="263"/>
        <end position="266"/>
    </location>
</feature>
<feature type="strand" evidence="3">
    <location>
        <begin position="269"/>
        <end position="271"/>
    </location>
</feature>
<feature type="strand" evidence="3">
    <location>
        <begin position="278"/>
        <end position="281"/>
    </location>
</feature>
<feature type="strand" evidence="3">
    <location>
        <begin position="284"/>
        <end position="286"/>
    </location>
</feature>
<feature type="strand" evidence="3">
    <location>
        <begin position="303"/>
        <end position="305"/>
    </location>
</feature>
<feature type="strand" evidence="3">
    <location>
        <begin position="322"/>
        <end position="324"/>
    </location>
</feature>
<feature type="strand" evidence="3">
    <location>
        <begin position="330"/>
        <end position="333"/>
    </location>
</feature>
<feature type="strand" evidence="3">
    <location>
        <begin position="338"/>
        <end position="340"/>
    </location>
</feature>
<evidence type="ECO:0000269" key="1">
    <source>
    </source>
</evidence>
<evidence type="ECO:0000269" key="2">
    <source>
    </source>
</evidence>
<evidence type="ECO:0007829" key="3">
    <source>
        <dbReference type="PDB" id="2KZK"/>
    </source>
</evidence>
<name>ATG34_YEAST</name>
<sequence length="412" mass="46655">MKIAVETTLFDFFVIDQFKKSTFSAPNTKVDTIKGCINKFIEQFNVYDEQHIFWQPPGKSNVRLLSNANDFGQLGNFLHKKIKCNIFIGEEALRKYDLNICGPYDKFVENSDPSVKKVVNRDDVMLSRKCLNIISEQLSILEKSISKAQNQVLQSSEVEGKKCIILPEDKPELIKFFSKFETSVQLQEVYEGYKVYEKLLQKFGGQKKRMESFLNENTPMSGAEAIKQINISEELKEKGERLTTPNDPLLHVEVSNEDNSLHFILYNKTNIIIPGNCTFEFSSQISEVFSIKMGPHEIGIKGQKELWFFPSLPTPLSNYTMKVVNQDGETILVGKCADSNEITLKSPLASFSTGSFQTGSFHTLQDPTNVFRADALSSPDESSIMSTPFLGETDEVYNSGSTLSRPFTWEEI</sequence>
<organism>
    <name type="scientific">Saccharomyces cerevisiae (strain ATCC 204508 / S288c)</name>
    <name type="common">Baker's yeast</name>
    <dbReference type="NCBI Taxonomy" id="559292"/>
    <lineage>
        <taxon>Eukaryota</taxon>
        <taxon>Fungi</taxon>
        <taxon>Dikarya</taxon>
        <taxon>Ascomycota</taxon>
        <taxon>Saccharomycotina</taxon>
        <taxon>Saccharomycetes</taxon>
        <taxon>Saccharomycetales</taxon>
        <taxon>Saccharomycetaceae</taxon>
        <taxon>Saccharomyces</taxon>
    </lineage>
</organism>
<reference key="1">
    <citation type="journal article" date="1995" name="Yeast">
        <title>A 29.425 kb segment on the left arm of yeast chromosome XV contains more than twice as many unknown as known open reading frames.</title>
        <authorList>
            <person name="Zumstein E."/>
            <person name="Pearson B.M."/>
            <person name="Kalogeropoulos A."/>
            <person name="Schweizer M."/>
        </authorList>
    </citation>
    <scope>NUCLEOTIDE SEQUENCE [GENOMIC DNA]</scope>
    <source>
        <strain>ATCC 96604 / S288c / FY1679</strain>
    </source>
</reference>
<reference key="2">
    <citation type="journal article" date="1997" name="Nature">
        <title>The nucleotide sequence of Saccharomyces cerevisiae chromosome XV.</title>
        <authorList>
            <person name="Dujon B."/>
            <person name="Albermann K."/>
            <person name="Aldea M."/>
            <person name="Alexandraki D."/>
            <person name="Ansorge W."/>
            <person name="Arino J."/>
            <person name="Benes V."/>
            <person name="Bohn C."/>
            <person name="Bolotin-Fukuhara M."/>
            <person name="Bordonne R."/>
            <person name="Boyer J."/>
            <person name="Camasses A."/>
            <person name="Casamayor A."/>
            <person name="Casas C."/>
            <person name="Cheret G."/>
            <person name="Cziepluch C."/>
            <person name="Daignan-Fornier B."/>
            <person name="Dang V.-D."/>
            <person name="de Haan M."/>
            <person name="Delius H."/>
            <person name="Durand P."/>
            <person name="Fairhead C."/>
            <person name="Feldmann H."/>
            <person name="Gaillon L."/>
            <person name="Galisson F."/>
            <person name="Gamo F.-J."/>
            <person name="Gancedo C."/>
            <person name="Goffeau A."/>
            <person name="Goulding S.E."/>
            <person name="Grivell L.A."/>
            <person name="Habbig B."/>
            <person name="Hand N.J."/>
            <person name="Hani J."/>
            <person name="Hattenhorst U."/>
            <person name="Hebling U."/>
            <person name="Hernando Y."/>
            <person name="Herrero E."/>
            <person name="Heumann K."/>
            <person name="Hiesel R."/>
            <person name="Hilger F."/>
            <person name="Hofmann B."/>
            <person name="Hollenberg C.P."/>
            <person name="Hughes B."/>
            <person name="Jauniaux J.-C."/>
            <person name="Kalogeropoulos A."/>
            <person name="Katsoulou C."/>
            <person name="Kordes E."/>
            <person name="Lafuente M.J."/>
            <person name="Landt O."/>
            <person name="Louis E.J."/>
            <person name="Maarse A.C."/>
            <person name="Madania A."/>
            <person name="Mannhaupt G."/>
            <person name="Marck C."/>
            <person name="Martin R.P."/>
            <person name="Mewes H.-W."/>
            <person name="Michaux G."/>
            <person name="Paces V."/>
            <person name="Parle-McDermott A.G."/>
            <person name="Pearson B.M."/>
            <person name="Perrin A."/>
            <person name="Pettersson B."/>
            <person name="Poch O."/>
            <person name="Pohl T.M."/>
            <person name="Poirey R."/>
            <person name="Portetelle D."/>
            <person name="Pujol A."/>
            <person name="Purnelle B."/>
            <person name="Ramezani Rad M."/>
            <person name="Rechmann S."/>
            <person name="Schwager C."/>
            <person name="Schweizer M."/>
            <person name="Sor F."/>
            <person name="Sterky F."/>
            <person name="Tarassov I.A."/>
            <person name="Teodoru C."/>
            <person name="Tettelin H."/>
            <person name="Thierry A."/>
            <person name="Tobiasch E."/>
            <person name="Tzermia M."/>
            <person name="Uhlen M."/>
            <person name="Unseld M."/>
            <person name="Valens M."/>
            <person name="Vandenbol M."/>
            <person name="Vetter I."/>
            <person name="Vlcek C."/>
            <person name="Voet M."/>
            <person name="Volckaert G."/>
            <person name="Voss H."/>
            <person name="Wambutt R."/>
            <person name="Wedler H."/>
            <person name="Wiemann S."/>
            <person name="Winsor B."/>
            <person name="Wolfe K.H."/>
            <person name="Zollner A."/>
            <person name="Zumstein E."/>
            <person name="Kleine K."/>
        </authorList>
    </citation>
    <scope>NUCLEOTIDE SEQUENCE [LARGE SCALE GENOMIC DNA]</scope>
    <source>
        <strain>ATCC 204508 / S288c</strain>
    </source>
</reference>
<reference key="3">
    <citation type="journal article" date="2014" name="G3 (Bethesda)">
        <title>The reference genome sequence of Saccharomyces cerevisiae: Then and now.</title>
        <authorList>
            <person name="Engel S.R."/>
            <person name="Dietrich F.S."/>
            <person name="Fisk D.G."/>
            <person name="Binkley G."/>
            <person name="Balakrishnan R."/>
            <person name="Costanzo M.C."/>
            <person name="Dwight S.S."/>
            <person name="Hitz B.C."/>
            <person name="Karra K."/>
            <person name="Nash R.S."/>
            <person name="Weng S."/>
            <person name="Wong E.D."/>
            <person name="Lloyd P."/>
            <person name="Skrzypek M.S."/>
            <person name="Miyasato S.R."/>
            <person name="Simison M."/>
            <person name="Cherry J.M."/>
        </authorList>
    </citation>
    <scope>GENOME REANNOTATION</scope>
    <source>
        <strain>ATCC 204508 / S288c</strain>
    </source>
</reference>
<reference key="4">
    <citation type="journal article" date="2008" name="Mol. Cell. Proteomics">
        <title>A multidimensional chromatography technology for in-depth phosphoproteome analysis.</title>
        <authorList>
            <person name="Albuquerque C.P."/>
            <person name="Smolka M.B."/>
            <person name="Payne S.H."/>
            <person name="Bafna V."/>
            <person name="Eng J."/>
            <person name="Zhou H."/>
        </authorList>
    </citation>
    <scope>IDENTIFICATION BY MASS SPECTROMETRY [LARGE SCALE ANALYSIS]</scope>
</reference>
<reference key="5">
    <citation type="journal article" date="2010" name="J. Biol. Chem.">
        <title>Selective transport of alpha-mannosidase by autophagic pathways: identification of a novel receptor, Atg34p.</title>
        <authorList>
            <person name="Suzuki K."/>
            <person name="Kondo C."/>
            <person name="Morimoto M."/>
            <person name="Ohsumi Y."/>
        </authorList>
    </citation>
    <scope>FUNCTION</scope>
    <scope>SUBCELLULAR LOCATION</scope>
    <scope>INTERACTION WITH AMS1; ATG8 AND ATG11</scope>
</reference>
<reference key="6">
    <citation type="journal article" date="2010" name="J. Biol. Chem.">
        <title>Selective transport of alpha-mannosidase by autophagic pathways: structural basis for cargo recognition by Atg19 and Atg34.</title>
        <authorList>
            <person name="Watanabe Y."/>
            <person name="Noda N.N."/>
            <person name="Kumeta H."/>
            <person name="Suzuki K."/>
            <person name="Ohsumi Y."/>
            <person name="Inagaki F."/>
        </authorList>
    </citation>
    <scope>STRUCTURE BY NMR OF 246-348</scope>
    <scope>FUNCTION</scope>
    <scope>DOMAIN AMS1-BINDING</scope>
    <scope>INTERACTION WITH AMS1</scope>
</reference>
<accession>Q12292</accession>
<accession>D6W1Y5</accession>
<keyword id="KW-0002">3D-structure</keyword>
<keyword id="KW-0072">Autophagy</keyword>
<keyword id="KW-0472">Membrane</keyword>
<keyword id="KW-0653">Protein transport</keyword>
<keyword id="KW-1185">Reference proteome</keyword>
<keyword id="KW-0813">Transport</keyword>
<protein>
    <recommendedName>
        <fullName>Autophagy-related protein 34</fullName>
    </recommendedName>
</protein>